<feature type="chain" id="PRO_1000070667" description="Urease subunit alpha">
    <location>
        <begin position="1"/>
        <end position="575"/>
    </location>
</feature>
<feature type="domain" description="Urease" evidence="1">
    <location>
        <begin position="137"/>
        <end position="575"/>
    </location>
</feature>
<feature type="active site" description="Proton donor" evidence="1">
    <location>
        <position position="328"/>
    </location>
</feature>
<feature type="binding site" evidence="1">
    <location>
        <position position="142"/>
    </location>
    <ligand>
        <name>Ni(2+)</name>
        <dbReference type="ChEBI" id="CHEBI:49786"/>
        <label>1</label>
    </ligand>
</feature>
<feature type="binding site" evidence="1">
    <location>
        <position position="144"/>
    </location>
    <ligand>
        <name>Ni(2+)</name>
        <dbReference type="ChEBI" id="CHEBI:49786"/>
        <label>1</label>
    </ligand>
</feature>
<feature type="binding site" description="via carbamate group" evidence="1">
    <location>
        <position position="225"/>
    </location>
    <ligand>
        <name>Ni(2+)</name>
        <dbReference type="ChEBI" id="CHEBI:49786"/>
        <label>1</label>
    </ligand>
</feature>
<feature type="binding site" description="via carbamate group" evidence="1">
    <location>
        <position position="225"/>
    </location>
    <ligand>
        <name>Ni(2+)</name>
        <dbReference type="ChEBI" id="CHEBI:49786"/>
        <label>2</label>
    </ligand>
</feature>
<feature type="binding site" evidence="1">
    <location>
        <position position="227"/>
    </location>
    <ligand>
        <name>substrate</name>
    </ligand>
</feature>
<feature type="binding site" evidence="1">
    <location>
        <position position="254"/>
    </location>
    <ligand>
        <name>Ni(2+)</name>
        <dbReference type="ChEBI" id="CHEBI:49786"/>
        <label>2</label>
    </ligand>
</feature>
<feature type="binding site" evidence="1">
    <location>
        <position position="280"/>
    </location>
    <ligand>
        <name>Ni(2+)</name>
        <dbReference type="ChEBI" id="CHEBI:49786"/>
        <label>2</label>
    </ligand>
</feature>
<feature type="binding site" evidence="1">
    <location>
        <position position="368"/>
    </location>
    <ligand>
        <name>Ni(2+)</name>
        <dbReference type="ChEBI" id="CHEBI:49786"/>
        <label>1</label>
    </ligand>
</feature>
<feature type="modified residue" description="N6-carboxylysine" evidence="1">
    <location>
        <position position="225"/>
    </location>
</feature>
<evidence type="ECO:0000255" key="1">
    <source>
        <dbReference type="HAMAP-Rule" id="MF_01953"/>
    </source>
</evidence>
<name>URE1_METPP</name>
<protein>
    <recommendedName>
        <fullName evidence="1">Urease subunit alpha</fullName>
        <ecNumber evidence="1">3.5.1.5</ecNumber>
    </recommendedName>
    <alternativeName>
        <fullName evidence="1">Urea amidohydrolase subunit alpha</fullName>
    </alternativeName>
</protein>
<comment type="catalytic activity">
    <reaction evidence="1">
        <text>urea + 2 H2O + H(+) = hydrogencarbonate + 2 NH4(+)</text>
        <dbReference type="Rhea" id="RHEA:20557"/>
        <dbReference type="ChEBI" id="CHEBI:15377"/>
        <dbReference type="ChEBI" id="CHEBI:15378"/>
        <dbReference type="ChEBI" id="CHEBI:16199"/>
        <dbReference type="ChEBI" id="CHEBI:17544"/>
        <dbReference type="ChEBI" id="CHEBI:28938"/>
        <dbReference type="EC" id="3.5.1.5"/>
    </reaction>
</comment>
<comment type="cofactor">
    <cofactor evidence="1">
        <name>Ni cation</name>
        <dbReference type="ChEBI" id="CHEBI:25516"/>
    </cofactor>
    <text evidence="1">Binds 2 nickel ions per subunit.</text>
</comment>
<comment type="pathway">
    <text evidence="1">Nitrogen metabolism; urea degradation; CO(2) and NH(3) from urea (urease route): step 1/1.</text>
</comment>
<comment type="subunit">
    <text evidence="1">Heterotrimer of UreA (gamma), UreB (beta) and UreC (alpha) subunits. Three heterotrimers associate to form the active enzyme.</text>
</comment>
<comment type="subcellular location">
    <subcellularLocation>
        <location evidence="1">Cytoplasm</location>
    </subcellularLocation>
</comment>
<comment type="PTM">
    <text evidence="1">Carboxylation allows a single lysine to coordinate two nickel ions.</text>
</comment>
<comment type="similarity">
    <text evidence="1">Belongs to the metallo-dependent hydrolases superfamily. Urease alpha subunit family.</text>
</comment>
<keyword id="KW-0963">Cytoplasm</keyword>
<keyword id="KW-0378">Hydrolase</keyword>
<keyword id="KW-0479">Metal-binding</keyword>
<keyword id="KW-0533">Nickel</keyword>
<keyword id="KW-1185">Reference proteome</keyword>
<dbReference type="EC" id="3.5.1.5" evidence="1"/>
<dbReference type="EMBL" id="CP000555">
    <property type="protein sequence ID" value="ABM93629.1"/>
    <property type="molecule type" value="Genomic_DNA"/>
</dbReference>
<dbReference type="RefSeq" id="WP_011828267.1">
    <property type="nucleotide sequence ID" value="NC_008825.1"/>
</dbReference>
<dbReference type="SMR" id="A2SDJ0"/>
<dbReference type="STRING" id="420662.Mpe_A0667"/>
<dbReference type="MEROPS" id="M38.982"/>
<dbReference type="KEGG" id="mpt:Mpe_A0667"/>
<dbReference type="eggNOG" id="COG0804">
    <property type="taxonomic scope" value="Bacteria"/>
</dbReference>
<dbReference type="HOGENOM" id="CLU_000980_0_0_4"/>
<dbReference type="UniPathway" id="UPA00258">
    <property type="reaction ID" value="UER00370"/>
</dbReference>
<dbReference type="Proteomes" id="UP000000366">
    <property type="component" value="Chromosome"/>
</dbReference>
<dbReference type="GO" id="GO:0005737">
    <property type="term" value="C:cytoplasm"/>
    <property type="evidence" value="ECO:0007669"/>
    <property type="project" value="UniProtKB-SubCell"/>
</dbReference>
<dbReference type="GO" id="GO:0016151">
    <property type="term" value="F:nickel cation binding"/>
    <property type="evidence" value="ECO:0007669"/>
    <property type="project" value="UniProtKB-UniRule"/>
</dbReference>
<dbReference type="GO" id="GO:0009039">
    <property type="term" value="F:urease activity"/>
    <property type="evidence" value="ECO:0007669"/>
    <property type="project" value="UniProtKB-UniRule"/>
</dbReference>
<dbReference type="GO" id="GO:0043419">
    <property type="term" value="P:urea catabolic process"/>
    <property type="evidence" value="ECO:0007669"/>
    <property type="project" value="UniProtKB-UniRule"/>
</dbReference>
<dbReference type="CDD" id="cd00375">
    <property type="entry name" value="Urease_alpha"/>
    <property type="match status" value="1"/>
</dbReference>
<dbReference type="Gene3D" id="3.20.20.140">
    <property type="entry name" value="Metal-dependent hydrolases"/>
    <property type="match status" value="1"/>
</dbReference>
<dbReference type="Gene3D" id="2.30.40.10">
    <property type="entry name" value="Urease, subunit C, domain 1"/>
    <property type="match status" value="1"/>
</dbReference>
<dbReference type="HAMAP" id="MF_01953">
    <property type="entry name" value="Urease_alpha"/>
    <property type="match status" value="1"/>
</dbReference>
<dbReference type="InterPro" id="IPR006680">
    <property type="entry name" value="Amidohydro-rel"/>
</dbReference>
<dbReference type="InterPro" id="IPR011059">
    <property type="entry name" value="Metal-dep_hydrolase_composite"/>
</dbReference>
<dbReference type="InterPro" id="IPR032466">
    <property type="entry name" value="Metal_Hydrolase"/>
</dbReference>
<dbReference type="InterPro" id="IPR011612">
    <property type="entry name" value="Urease_alpha_N_dom"/>
</dbReference>
<dbReference type="InterPro" id="IPR050112">
    <property type="entry name" value="Urease_alpha_subunit"/>
</dbReference>
<dbReference type="InterPro" id="IPR017950">
    <property type="entry name" value="Urease_AS"/>
</dbReference>
<dbReference type="InterPro" id="IPR005848">
    <property type="entry name" value="Urease_asu"/>
</dbReference>
<dbReference type="InterPro" id="IPR017951">
    <property type="entry name" value="Urease_asu_c"/>
</dbReference>
<dbReference type="InterPro" id="IPR029754">
    <property type="entry name" value="Urease_Ni-bd"/>
</dbReference>
<dbReference type="NCBIfam" id="NF009685">
    <property type="entry name" value="PRK13206.1"/>
    <property type="match status" value="1"/>
</dbReference>
<dbReference type="NCBIfam" id="NF009686">
    <property type="entry name" value="PRK13207.1"/>
    <property type="match status" value="1"/>
</dbReference>
<dbReference type="NCBIfam" id="TIGR01792">
    <property type="entry name" value="urease_alph"/>
    <property type="match status" value="1"/>
</dbReference>
<dbReference type="PANTHER" id="PTHR43440">
    <property type="entry name" value="UREASE"/>
    <property type="match status" value="1"/>
</dbReference>
<dbReference type="PANTHER" id="PTHR43440:SF1">
    <property type="entry name" value="UREASE"/>
    <property type="match status" value="1"/>
</dbReference>
<dbReference type="Pfam" id="PF01979">
    <property type="entry name" value="Amidohydro_1"/>
    <property type="match status" value="1"/>
</dbReference>
<dbReference type="Pfam" id="PF00449">
    <property type="entry name" value="Urease_alpha"/>
    <property type="match status" value="1"/>
</dbReference>
<dbReference type="PRINTS" id="PR01752">
    <property type="entry name" value="UREASE"/>
</dbReference>
<dbReference type="SUPFAM" id="SSF51338">
    <property type="entry name" value="Composite domain of metallo-dependent hydrolases"/>
    <property type="match status" value="2"/>
</dbReference>
<dbReference type="SUPFAM" id="SSF51556">
    <property type="entry name" value="Metallo-dependent hydrolases"/>
    <property type="match status" value="1"/>
</dbReference>
<dbReference type="PROSITE" id="PS01120">
    <property type="entry name" value="UREASE_1"/>
    <property type="match status" value="1"/>
</dbReference>
<dbReference type="PROSITE" id="PS00145">
    <property type="entry name" value="UREASE_2"/>
    <property type="match status" value="1"/>
</dbReference>
<dbReference type="PROSITE" id="PS51368">
    <property type="entry name" value="UREASE_3"/>
    <property type="match status" value="1"/>
</dbReference>
<proteinExistence type="inferred from homology"/>
<reference key="1">
    <citation type="journal article" date="2007" name="J. Bacteriol.">
        <title>Whole-genome analysis of the methyl tert-butyl ether-degrading beta-proteobacterium Methylibium petroleiphilum PM1.</title>
        <authorList>
            <person name="Kane S.R."/>
            <person name="Chakicherla A.Y."/>
            <person name="Chain P.S.G."/>
            <person name="Schmidt R."/>
            <person name="Shin M.W."/>
            <person name="Legler T.C."/>
            <person name="Scow K.M."/>
            <person name="Larimer F.W."/>
            <person name="Lucas S.M."/>
            <person name="Richardson P.M."/>
            <person name="Hristova K.R."/>
        </authorList>
    </citation>
    <scope>NUCLEOTIDE SEQUENCE [LARGE SCALE GENOMIC DNA]</scope>
    <source>
        <strain>ATCC BAA-1232 / LMG 22953 / PM1</strain>
    </source>
</reference>
<accession>A2SDJ0</accession>
<organism>
    <name type="scientific">Methylibium petroleiphilum (strain ATCC BAA-1232 / LMG 22953 / PM1)</name>
    <dbReference type="NCBI Taxonomy" id="420662"/>
    <lineage>
        <taxon>Bacteria</taxon>
        <taxon>Pseudomonadati</taxon>
        <taxon>Pseudomonadota</taxon>
        <taxon>Betaproteobacteria</taxon>
        <taxon>Burkholderiales</taxon>
        <taxon>Sphaerotilaceae</taxon>
        <taxon>Methylibium</taxon>
    </lineage>
</organism>
<gene>
    <name evidence="1" type="primary">ureC</name>
    <name type="ordered locus">Mpe_A0667</name>
</gene>
<sequence>MATIGRRAYAEMYGPTVGDRVRLADTELVIEVEADYTLRAGGYGEEVKFGGGKVIRDGMGQSQRPNGPGPHDAVDCVVTNALILDHWGIVKADIGLRGQRIAAIGKAGNPDVQPGIDIVIGPGTEVIAGEGLIVTAGGIDCHIHFICPQQIEEALSSGVTTMLGGGTGPATGTFATTCTPGPENIANMLRAADAFPMNLGFFGKGNASRPEALRQQVEAGVIGLKLHEDWGTTPAAIDCCLSVADEGDVQVAIHSDTLNESGFVEDTIGATKGRTLCAFHTEGAGGGHAPDILRVVGEANFLPSSTNPTMPYTVNTLDEHVDMLMVCHHLDAAIAEDLAFAESRIRRETIAAEDILHDLGAISMFSSDSQAMGRVGEVVLRCWQTAHKMKVQRGKLPGDPERHDNGRAKRYVAKYTINPAIAHGVSHEVGSIEVGKWADLVFWRPAFFGVKPSLVMKGGFIASALMGDANASIPTPQPVHYRPMFGAFGGALTRGSLSFVSQAALASEVGSVYGLRKPLSAVKQCRTVKKGDMVHNAYLPRMEVDAQTYQVRADGQLLTCEPATALPMTQRYFLF</sequence>